<dbReference type="EC" id="6.3.4.20" evidence="1"/>
<dbReference type="EMBL" id="FM180568">
    <property type="protein sequence ID" value="CAS07927.1"/>
    <property type="molecule type" value="Genomic_DNA"/>
</dbReference>
<dbReference type="RefSeq" id="WP_000817225.1">
    <property type="nucleotide sequence ID" value="NC_011601.1"/>
</dbReference>
<dbReference type="SMR" id="B7UJR7"/>
<dbReference type="KEGG" id="ecg:E2348C_0379"/>
<dbReference type="HOGENOM" id="CLU_081854_0_0_6"/>
<dbReference type="UniPathway" id="UPA00391"/>
<dbReference type="Proteomes" id="UP000008205">
    <property type="component" value="Chromosome"/>
</dbReference>
<dbReference type="GO" id="GO:0005524">
    <property type="term" value="F:ATP binding"/>
    <property type="evidence" value="ECO:0007669"/>
    <property type="project" value="UniProtKB-UniRule"/>
</dbReference>
<dbReference type="GO" id="GO:0016879">
    <property type="term" value="F:ligase activity, forming carbon-nitrogen bonds"/>
    <property type="evidence" value="ECO:0007669"/>
    <property type="project" value="UniProtKB-UniRule"/>
</dbReference>
<dbReference type="GO" id="GO:0008270">
    <property type="term" value="F:zinc ion binding"/>
    <property type="evidence" value="ECO:0007669"/>
    <property type="project" value="UniProtKB-UniRule"/>
</dbReference>
<dbReference type="GO" id="GO:0008616">
    <property type="term" value="P:queuosine biosynthetic process"/>
    <property type="evidence" value="ECO:0007669"/>
    <property type="project" value="UniProtKB-UniRule"/>
</dbReference>
<dbReference type="CDD" id="cd01995">
    <property type="entry name" value="QueC-like"/>
    <property type="match status" value="1"/>
</dbReference>
<dbReference type="FunFam" id="3.40.50.620:FF:000017">
    <property type="entry name" value="7-cyano-7-deazaguanine synthase"/>
    <property type="match status" value="1"/>
</dbReference>
<dbReference type="Gene3D" id="3.40.50.620">
    <property type="entry name" value="HUPs"/>
    <property type="match status" value="1"/>
</dbReference>
<dbReference type="HAMAP" id="MF_01633">
    <property type="entry name" value="QueC"/>
    <property type="match status" value="1"/>
</dbReference>
<dbReference type="InterPro" id="IPR018317">
    <property type="entry name" value="QueC"/>
</dbReference>
<dbReference type="InterPro" id="IPR014729">
    <property type="entry name" value="Rossmann-like_a/b/a_fold"/>
</dbReference>
<dbReference type="NCBIfam" id="TIGR00364">
    <property type="entry name" value="7-cyano-7-deazaguanine synthase QueC"/>
    <property type="match status" value="1"/>
</dbReference>
<dbReference type="NCBIfam" id="NF008317">
    <property type="entry name" value="PRK11106.1"/>
    <property type="match status" value="1"/>
</dbReference>
<dbReference type="PANTHER" id="PTHR42914">
    <property type="entry name" value="7-CYANO-7-DEAZAGUANINE SYNTHASE"/>
    <property type="match status" value="1"/>
</dbReference>
<dbReference type="PANTHER" id="PTHR42914:SF1">
    <property type="entry name" value="7-CYANO-7-DEAZAGUANINE SYNTHASE"/>
    <property type="match status" value="1"/>
</dbReference>
<dbReference type="Pfam" id="PF06508">
    <property type="entry name" value="QueC"/>
    <property type="match status" value="1"/>
</dbReference>
<dbReference type="PIRSF" id="PIRSF006293">
    <property type="entry name" value="ExsB"/>
    <property type="match status" value="1"/>
</dbReference>
<dbReference type="SUPFAM" id="SSF52402">
    <property type="entry name" value="Adenine nucleotide alpha hydrolases-like"/>
    <property type="match status" value="1"/>
</dbReference>
<name>QUEC_ECO27</name>
<sequence>MKRAVVVFSGGQDSTTCLVQALQQYDEVHCVTFDYGQRHRAEIDVARELALKLGARAHKVLDVTLLNELAVSSLTRDSIPVPDYEPEADGIPNTFVPGRNILFLTLAAIYAYQVKAEAVITGVCETDFSGYPDCRDEFVKALNHAVSLGMAKDIRFETPLMWIDKAETWALADYYGKLDLVRNETLTCYNGIKGDGCGHCAACNLRANGLNHYLADKPTVMAAIKQKTGLK</sequence>
<organism>
    <name type="scientific">Escherichia coli O127:H6 (strain E2348/69 / EPEC)</name>
    <dbReference type="NCBI Taxonomy" id="574521"/>
    <lineage>
        <taxon>Bacteria</taxon>
        <taxon>Pseudomonadati</taxon>
        <taxon>Pseudomonadota</taxon>
        <taxon>Gammaproteobacteria</taxon>
        <taxon>Enterobacterales</taxon>
        <taxon>Enterobacteriaceae</taxon>
        <taxon>Escherichia</taxon>
    </lineage>
</organism>
<evidence type="ECO:0000255" key="1">
    <source>
        <dbReference type="HAMAP-Rule" id="MF_01633"/>
    </source>
</evidence>
<gene>
    <name evidence="1" type="primary">queC</name>
    <name type="ordered locus">E2348C_0379</name>
</gene>
<accession>B7UJR7</accession>
<feature type="chain" id="PRO_1000186587" description="7-cyano-7-deazaguanine synthase">
    <location>
        <begin position="1"/>
        <end position="231"/>
    </location>
</feature>
<feature type="binding site" evidence="1">
    <location>
        <begin position="8"/>
        <end position="18"/>
    </location>
    <ligand>
        <name>ATP</name>
        <dbReference type="ChEBI" id="CHEBI:30616"/>
    </ligand>
</feature>
<feature type="binding site" evidence="1">
    <location>
        <position position="188"/>
    </location>
    <ligand>
        <name>Zn(2+)</name>
        <dbReference type="ChEBI" id="CHEBI:29105"/>
    </ligand>
</feature>
<feature type="binding site" evidence="1">
    <location>
        <position position="197"/>
    </location>
    <ligand>
        <name>Zn(2+)</name>
        <dbReference type="ChEBI" id="CHEBI:29105"/>
    </ligand>
</feature>
<feature type="binding site" evidence="1">
    <location>
        <position position="200"/>
    </location>
    <ligand>
        <name>Zn(2+)</name>
        <dbReference type="ChEBI" id="CHEBI:29105"/>
    </ligand>
</feature>
<feature type="binding site" evidence="1">
    <location>
        <position position="203"/>
    </location>
    <ligand>
        <name>Zn(2+)</name>
        <dbReference type="ChEBI" id="CHEBI:29105"/>
    </ligand>
</feature>
<keyword id="KW-0067">ATP-binding</keyword>
<keyword id="KW-0436">Ligase</keyword>
<keyword id="KW-0479">Metal-binding</keyword>
<keyword id="KW-0547">Nucleotide-binding</keyword>
<keyword id="KW-0671">Queuosine biosynthesis</keyword>
<keyword id="KW-1185">Reference proteome</keyword>
<keyword id="KW-0862">Zinc</keyword>
<comment type="function">
    <text evidence="1">Catalyzes the ATP-dependent conversion of 7-carboxy-7-deazaguanine (CDG) to 7-cyano-7-deazaguanine (preQ(0)).</text>
</comment>
<comment type="catalytic activity">
    <reaction evidence="1">
        <text>7-carboxy-7-deazaguanine + NH4(+) + ATP = 7-cyano-7-deazaguanine + ADP + phosphate + H2O + H(+)</text>
        <dbReference type="Rhea" id="RHEA:27982"/>
        <dbReference type="ChEBI" id="CHEBI:15377"/>
        <dbReference type="ChEBI" id="CHEBI:15378"/>
        <dbReference type="ChEBI" id="CHEBI:28938"/>
        <dbReference type="ChEBI" id="CHEBI:30616"/>
        <dbReference type="ChEBI" id="CHEBI:43474"/>
        <dbReference type="ChEBI" id="CHEBI:45075"/>
        <dbReference type="ChEBI" id="CHEBI:61036"/>
        <dbReference type="ChEBI" id="CHEBI:456216"/>
        <dbReference type="EC" id="6.3.4.20"/>
    </reaction>
</comment>
<comment type="cofactor">
    <cofactor evidence="1">
        <name>Zn(2+)</name>
        <dbReference type="ChEBI" id="CHEBI:29105"/>
    </cofactor>
    <text evidence="1">Binds 1 zinc ion per subunit.</text>
</comment>
<comment type="pathway">
    <text evidence="1">Purine metabolism; 7-cyano-7-deazaguanine biosynthesis.</text>
</comment>
<comment type="similarity">
    <text evidence="1">Belongs to the QueC family.</text>
</comment>
<reference key="1">
    <citation type="journal article" date="2009" name="J. Bacteriol.">
        <title>Complete genome sequence and comparative genome analysis of enteropathogenic Escherichia coli O127:H6 strain E2348/69.</title>
        <authorList>
            <person name="Iguchi A."/>
            <person name="Thomson N.R."/>
            <person name="Ogura Y."/>
            <person name="Saunders D."/>
            <person name="Ooka T."/>
            <person name="Henderson I.R."/>
            <person name="Harris D."/>
            <person name="Asadulghani M."/>
            <person name="Kurokawa K."/>
            <person name="Dean P."/>
            <person name="Kenny B."/>
            <person name="Quail M.A."/>
            <person name="Thurston S."/>
            <person name="Dougan G."/>
            <person name="Hayashi T."/>
            <person name="Parkhill J."/>
            <person name="Frankel G."/>
        </authorList>
    </citation>
    <scope>NUCLEOTIDE SEQUENCE [LARGE SCALE GENOMIC DNA]</scope>
    <source>
        <strain>E2348/69 / EPEC</strain>
    </source>
</reference>
<proteinExistence type="inferred from homology"/>
<protein>
    <recommendedName>
        <fullName evidence="1">7-cyano-7-deazaguanine synthase</fullName>
        <ecNumber evidence="1">6.3.4.20</ecNumber>
    </recommendedName>
    <alternativeName>
        <fullName evidence="1">7-cyano-7-carbaguanine synthase</fullName>
    </alternativeName>
    <alternativeName>
        <fullName evidence="1">PreQ(0) synthase</fullName>
    </alternativeName>
    <alternativeName>
        <fullName evidence="1">Queuosine biosynthesis protein QueC</fullName>
    </alternativeName>
</protein>